<gene>
    <name type="primary">Ncbp1</name>
    <name type="synonym">Cbp80</name>
</gene>
<organism>
    <name type="scientific">Rattus norvegicus</name>
    <name type="common">Rat</name>
    <dbReference type="NCBI Taxonomy" id="10116"/>
    <lineage>
        <taxon>Eukaryota</taxon>
        <taxon>Metazoa</taxon>
        <taxon>Chordata</taxon>
        <taxon>Craniata</taxon>
        <taxon>Vertebrata</taxon>
        <taxon>Euteleostomi</taxon>
        <taxon>Mammalia</taxon>
        <taxon>Eutheria</taxon>
        <taxon>Euarchontoglires</taxon>
        <taxon>Glires</taxon>
        <taxon>Rodentia</taxon>
        <taxon>Myomorpha</taxon>
        <taxon>Muroidea</taxon>
        <taxon>Muridae</taxon>
        <taxon>Murinae</taxon>
        <taxon>Rattus</taxon>
    </lineage>
</organism>
<sequence>MSRRRHSYENDGGQPHKRRKTSDANETEDHLESLICKVGEKSACSLESNLEGLAGVLEADLPNYKSKILRLLCTVARLLPEKLTIYTTLVGLLNARNYNFGGEFVEAMIRQLKESLKANNYNEAVYLVRFLSDLVNCHVIAAPSMVAMFENFVSVTQEEDVPQVRRDWYVYAFLSSLPWVGKELYEKKDAEMDRIFSSTESYLKRRQKTHVPMLQVWTADKPHPQEEYLDCLWAQIQKLKKDRWQERHILRPYLAFDSILCEALQHNLPPFTPPPHTEDSVYPMPRVIFRMFDYTDDPEGPVMPGSHSVERFVIEENLHCIIKSYWKERKTCAAQLVSYPGKNKIPLNYHIVEVIFAELFQLPAPPHIDVMYTTLLIELCKLQPGSLPQVLAQATEMLYMRLDTMSTTCVDRFINWFSHHLSNFQFRWSWEDWSDCLTQDLESPKPKFVREVLEKCMRLSYHQHILDIVPPTFSALCPANPTCIYKYGDESSNSLPGHSVALCLSVAFKSKATNDEIFSILKDVPNPNQVDDDDEGFRFNPLKIEVFVQTLLHLAAKSFSHSFSALAKFHEVFKTLAESDKGKLHVLRVMFEVWRNHPQMIAVLVDKMIRTQIVDCAAVANWIFSSELSRDFTRLFVWEILHSTIRKMNKHVLKIQKELEEAKEKLARQHKRRSDDDDRGSDRKDGALEEQIERLQEKVESAQSEQKNLFLVIFQRFIMILTEHLVRCETDGTSILTPWYKNCIERLQQIFLQHHQIIQQYMVTLENLLFTAELDPHILAVFQQFCALQA</sequence>
<evidence type="ECO:0000250" key="1">
    <source>
        <dbReference type="UniProtKB" id="Q09161"/>
    </source>
</evidence>
<evidence type="ECO:0000250" key="2">
    <source>
        <dbReference type="UniProtKB" id="Q3UYV9"/>
    </source>
</evidence>
<evidence type="ECO:0000255" key="3"/>
<evidence type="ECO:0000256" key="4">
    <source>
        <dbReference type="SAM" id="MobiDB-lite"/>
    </source>
</evidence>
<evidence type="ECO:0000305" key="5"/>
<evidence type="ECO:0007744" key="6">
    <source>
    </source>
</evidence>
<dbReference type="EMBL" id="BC092199">
    <property type="protein sequence ID" value="AAH92199.1"/>
    <property type="molecule type" value="mRNA"/>
</dbReference>
<dbReference type="RefSeq" id="NP_001014785.1">
    <property type="nucleotide sequence ID" value="NM_001014785.1"/>
</dbReference>
<dbReference type="SMR" id="Q56A27"/>
<dbReference type="FunCoup" id="Q56A27">
    <property type="interactions" value="5142"/>
</dbReference>
<dbReference type="IntAct" id="Q56A27">
    <property type="interactions" value="2"/>
</dbReference>
<dbReference type="STRING" id="10116.ENSRNOP00000038713"/>
<dbReference type="iPTMnet" id="Q56A27"/>
<dbReference type="PhosphoSitePlus" id="Q56A27"/>
<dbReference type="jPOST" id="Q56A27"/>
<dbReference type="PaxDb" id="10116-ENSRNOP00000038713"/>
<dbReference type="Ensembl" id="ENSRNOT00000109965.1">
    <property type="protein sequence ID" value="ENSRNOP00000077595.1"/>
    <property type="gene ID" value="ENSRNOG00000023605.5"/>
</dbReference>
<dbReference type="GeneID" id="298075"/>
<dbReference type="KEGG" id="rno:298075"/>
<dbReference type="UCSC" id="RGD:1308973">
    <property type="organism name" value="rat"/>
</dbReference>
<dbReference type="AGR" id="RGD:1308973"/>
<dbReference type="CTD" id="4686"/>
<dbReference type="RGD" id="1308973">
    <property type="gene designation" value="Ncbp1"/>
</dbReference>
<dbReference type="eggNOG" id="KOG1104">
    <property type="taxonomic scope" value="Eukaryota"/>
</dbReference>
<dbReference type="GeneTree" id="ENSGT00390000001733"/>
<dbReference type="HOGENOM" id="CLU_013207_0_0_1"/>
<dbReference type="InParanoid" id="Q56A27"/>
<dbReference type="OMA" id="CAAEGLM"/>
<dbReference type="OrthoDB" id="10252707at2759"/>
<dbReference type="PhylomeDB" id="Q56A27"/>
<dbReference type="TreeFam" id="TF313400"/>
<dbReference type="Reactome" id="R-RNO-111367">
    <property type="pathway name" value="SLBP independent Processing of Histone Pre-mRNAs"/>
</dbReference>
<dbReference type="Reactome" id="R-RNO-112382">
    <property type="pathway name" value="Formation of RNA Pol II elongation complex"/>
</dbReference>
<dbReference type="Reactome" id="R-RNO-113418">
    <property type="pathway name" value="Formation of the Early Elongation Complex"/>
</dbReference>
<dbReference type="Reactome" id="R-RNO-159227">
    <property type="pathway name" value="Transport of the SLBP independent Mature mRNA"/>
</dbReference>
<dbReference type="Reactome" id="R-RNO-159230">
    <property type="pathway name" value="Transport of the SLBP Dependant Mature mRNA"/>
</dbReference>
<dbReference type="Reactome" id="R-RNO-159231">
    <property type="pathway name" value="Transport of Mature mRNA Derived from an Intronless Transcript"/>
</dbReference>
<dbReference type="Reactome" id="R-RNO-159236">
    <property type="pathway name" value="Transport of Mature mRNA derived from an Intron-Containing Transcript"/>
</dbReference>
<dbReference type="Reactome" id="R-RNO-674695">
    <property type="pathway name" value="RNA Polymerase II Pre-transcription Events"/>
</dbReference>
<dbReference type="Reactome" id="R-RNO-6803529">
    <property type="pathway name" value="FGFR2 alternative splicing"/>
</dbReference>
<dbReference type="Reactome" id="R-RNO-6807505">
    <property type="pathway name" value="RNA polymerase II transcribes snRNA genes"/>
</dbReference>
<dbReference type="Reactome" id="R-RNO-72086">
    <property type="pathway name" value="mRNA Capping"/>
</dbReference>
<dbReference type="Reactome" id="R-RNO-72163">
    <property type="pathway name" value="mRNA Splicing - Major Pathway"/>
</dbReference>
<dbReference type="Reactome" id="R-RNO-72165">
    <property type="pathway name" value="mRNA Splicing - Minor Pathway"/>
</dbReference>
<dbReference type="Reactome" id="R-RNO-72187">
    <property type="pathway name" value="mRNA 3'-end processing"/>
</dbReference>
<dbReference type="Reactome" id="R-RNO-72203">
    <property type="pathway name" value="Processing of Capped Intron-Containing Pre-mRNA"/>
</dbReference>
<dbReference type="Reactome" id="R-RNO-73856">
    <property type="pathway name" value="RNA Polymerase II Transcription Termination"/>
</dbReference>
<dbReference type="Reactome" id="R-RNO-77588">
    <property type="pathway name" value="SLBP Dependent Processing of Replication-Dependent Histone Pre-mRNAs"/>
</dbReference>
<dbReference type="Reactome" id="R-RNO-77595">
    <property type="pathway name" value="Processing of Intronless Pre-mRNAs"/>
</dbReference>
<dbReference type="Reactome" id="R-RNO-975956">
    <property type="pathway name" value="Nonsense Mediated Decay (NMD) independent of the Exon Junction Complex (EJC)"/>
</dbReference>
<dbReference type="Reactome" id="R-RNO-975957">
    <property type="pathway name" value="Nonsense Mediated Decay (NMD) enhanced by the Exon Junction Complex (EJC)"/>
</dbReference>
<dbReference type="PRO" id="PR:Q56A27"/>
<dbReference type="Proteomes" id="UP000002494">
    <property type="component" value="Chromosome 5"/>
</dbReference>
<dbReference type="Bgee" id="ENSRNOG00000023605">
    <property type="expression patterns" value="Expressed in adult mammalian kidney and 19 other cell types or tissues"/>
</dbReference>
<dbReference type="GO" id="GO:0005737">
    <property type="term" value="C:cytoplasm"/>
    <property type="evidence" value="ECO:0000266"/>
    <property type="project" value="RGD"/>
</dbReference>
<dbReference type="GO" id="GO:0005829">
    <property type="term" value="C:cytosol"/>
    <property type="evidence" value="ECO:0007669"/>
    <property type="project" value="Ensembl"/>
</dbReference>
<dbReference type="GO" id="GO:0005739">
    <property type="term" value="C:mitochondrion"/>
    <property type="evidence" value="ECO:0007669"/>
    <property type="project" value="Ensembl"/>
</dbReference>
<dbReference type="GO" id="GO:0005846">
    <property type="term" value="C:nuclear cap binding complex"/>
    <property type="evidence" value="ECO:0000314"/>
    <property type="project" value="RGD"/>
</dbReference>
<dbReference type="GO" id="GO:0005654">
    <property type="term" value="C:nucleoplasm"/>
    <property type="evidence" value="ECO:0007669"/>
    <property type="project" value="Ensembl"/>
</dbReference>
<dbReference type="GO" id="GO:0005634">
    <property type="term" value="C:nucleus"/>
    <property type="evidence" value="ECO:0000250"/>
    <property type="project" value="UniProtKB"/>
</dbReference>
<dbReference type="GO" id="GO:1990904">
    <property type="term" value="C:ribonucleoprotein complex"/>
    <property type="evidence" value="ECO:0000250"/>
    <property type="project" value="UniProtKB"/>
</dbReference>
<dbReference type="GO" id="GO:0034518">
    <property type="term" value="C:RNA cap binding complex"/>
    <property type="evidence" value="ECO:0000266"/>
    <property type="project" value="RGD"/>
</dbReference>
<dbReference type="GO" id="GO:0060090">
    <property type="term" value="F:molecular adaptor activity"/>
    <property type="evidence" value="ECO:0000266"/>
    <property type="project" value="RGD"/>
</dbReference>
<dbReference type="GO" id="GO:0003729">
    <property type="term" value="F:mRNA binding"/>
    <property type="evidence" value="ECO:0000318"/>
    <property type="project" value="GO_Central"/>
</dbReference>
<dbReference type="GO" id="GO:0000340">
    <property type="term" value="F:RNA 7-methylguanosine cap binding"/>
    <property type="evidence" value="ECO:0000266"/>
    <property type="project" value="RGD"/>
</dbReference>
<dbReference type="GO" id="GO:0000339">
    <property type="term" value="F:RNA cap binding"/>
    <property type="evidence" value="ECO:0000318"/>
    <property type="project" value="GO_Central"/>
</dbReference>
<dbReference type="GO" id="GO:0006370">
    <property type="term" value="P:7-methylguanosine mRNA capping"/>
    <property type="evidence" value="ECO:0000250"/>
    <property type="project" value="UniProtKB"/>
</dbReference>
<dbReference type="GO" id="GO:0051607">
    <property type="term" value="P:defense response to virus"/>
    <property type="evidence" value="ECO:0000266"/>
    <property type="project" value="RGD"/>
</dbReference>
<dbReference type="GO" id="GO:0008334">
    <property type="term" value="P:histone mRNA metabolic process"/>
    <property type="evidence" value="ECO:0000266"/>
    <property type="project" value="RGD"/>
</dbReference>
<dbReference type="GO" id="GO:0006406">
    <property type="term" value="P:mRNA export from nucleus"/>
    <property type="evidence" value="ECO:0000250"/>
    <property type="project" value="UniProtKB"/>
</dbReference>
<dbReference type="GO" id="GO:0016071">
    <property type="term" value="P:mRNA metabolic process"/>
    <property type="evidence" value="ECO:0000250"/>
    <property type="project" value="UniProtKB"/>
</dbReference>
<dbReference type="GO" id="GO:0042789">
    <property type="term" value="P:mRNA transcription by RNA polymerase II"/>
    <property type="evidence" value="ECO:0000266"/>
    <property type="project" value="RGD"/>
</dbReference>
<dbReference type="GO" id="GO:0000184">
    <property type="term" value="P:nuclear-transcribed mRNA catabolic process, nonsense-mediated decay"/>
    <property type="evidence" value="ECO:0000250"/>
    <property type="project" value="UniProtKB"/>
</dbReference>
<dbReference type="GO" id="GO:0030307">
    <property type="term" value="P:positive regulation of cell growth"/>
    <property type="evidence" value="ECO:0000250"/>
    <property type="project" value="UniProtKB"/>
</dbReference>
<dbReference type="GO" id="GO:0031442">
    <property type="term" value="P:positive regulation of mRNA 3'-end processing"/>
    <property type="evidence" value="ECO:0000250"/>
    <property type="project" value="UniProtKB"/>
</dbReference>
<dbReference type="GO" id="GO:0048026">
    <property type="term" value="P:positive regulation of mRNA splicing, via spliceosome"/>
    <property type="evidence" value="ECO:0000266"/>
    <property type="project" value="RGD"/>
</dbReference>
<dbReference type="GO" id="GO:0050684">
    <property type="term" value="P:regulation of mRNA processing"/>
    <property type="evidence" value="ECO:0000318"/>
    <property type="project" value="GO_Central"/>
</dbReference>
<dbReference type="GO" id="GO:0006446">
    <property type="term" value="P:regulation of translational initiation"/>
    <property type="evidence" value="ECO:0000250"/>
    <property type="project" value="UniProtKB"/>
</dbReference>
<dbReference type="GO" id="GO:0031047">
    <property type="term" value="P:regulatory ncRNA-mediated gene silencing"/>
    <property type="evidence" value="ECO:0007669"/>
    <property type="project" value="UniProtKB-KW"/>
</dbReference>
<dbReference type="GO" id="GO:0006401">
    <property type="term" value="P:RNA catabolic process"/>
    <property type="evidence" value="ECO:0000266"/>
    <property type="project" value="RGD"/>
</dbReference>
<dbReference type="GO" id="GO:0006408">
    <property type="term" value="P:snRNA export from nucleus"/>
    <property type="evidence" value="ECO:0000266"/>
    <property type="project" value="RGD"/>
</dbReference>
<dbReference type="GO" id="GO:0000245">
    <property type="term" value="P:spliceosomal complex assembly"/>
    <property type="evidence" value="ECO:0000266"/>
    <property type="project" value="RGD"/>
</dbReference>
<dbReference type="FunFam" id="1.25.40.180:FF:000021">
    <property type="entry name" value="Nuclear cap binding protein subunit 1"/>
    <property type="match status" value="1"/>
</dbReference>
<dbReference type="FunFam" id="1.25.40.180:FF:000010">
    <property type="entry name" value="Nuclear cap-binding protein subunit 1"/>
    <property type="match status" value="1"/>
</dbReference>
<dbReference type="Gene3D" id="1.25.40.180">
    <property type="match status" value="3"/>
</dbReference>
<dbReference type="InterPro" id="IPR016024">
    <property type="entry name" value="ARM-type_fold"/>
</dbReference>
<dbReference type="InterPro" id="IPR027159">
    <property type="entry name" value="CBP80"/>
</dbReference>
<dbReference type="InterPro" id="IPR015172">
    <property type="entry name" value="MIF4G-like_typ-1"/>
</dbReference>
<dbReference type="InterPro" id="IPR015174">
    <property type="entry name" value="MIF4G-like_typ-2"/>
</dbReference>
<dbReference type="InterPro" id="IPR003890">
    <property type="entry name" value="MIF4G-like_typ-3"/>
</dbReference>
<dbReference type="PANTHER" id="PTHR12412">
    <property type="entry name" value="CAP BINDING PROTEIN"/>
    <property type="match status" value="1"/>
</dbReference>
<dbReference type="PANTHER" id="PTHR12412:SF2">
    <property type="entry name" value="NUCLEAR CAP-BINDING PROTEIN SUBUNIT 1"/>
    <property type="match status" value="1"/>
</dbReference>
<dbReference type="Pfam" id="PF02854">
    <property type="entry name" value="MIF4G"/>
    <property type="match status" value="1"/>
</dbReference>
<dbReference type="Pfam" id="PF09088">
    <property type="entry name" value="MIF4G_like"/>
    <property type="match status" value="1"/>
</dbReference>
<dbReference type="Pfam" id="PF09090">
    <property type="entry name" value="MIF4G_like_2"/>
    <property type="match status" value="1"/>
</dbReference>
<dbReference type="SMART" id="SM00543">
    <property type="entry name" value="MIF4G"/>
    <property type="match status" value="1"/>
</dbReference>
<dbReference type="SUPFAM" id="SSF48371">
    <property type="entry name" value="ARM repeat"/>
    <property type="match status" value="3"/>
</dbReference>
<proteinExistence type="evidence at protein level"/>
<reference key="1">
    <citation type="journal article" date="2004" name="Genome Res.">
        <title>The status, quality, and expansion of the NIH full-length cDNA project: the Mammalian Gene Collection (MGC).</title>
        <authorList>
            <consortium name="The MGC Project Team"/>
        </authorList>
    </citation>
    <scope>NUCLEOTIDE SEQUENCE [LARGE SCALE MRNA]</scope>
    <source>
        <tissue>Brain</tissue>
    </source>
</reference>
<reference key="2">
    <citation type="journal article" date="2012" name="Nat. Commun.">
        <title>Quantitative maps of protein phosphorylation sites across 14 different rat organs and tissues.</title>
        <authorList>
            <person name="Lundby A."/>
            <person name="Secher A."/>
            <person name="Lage K."/>
            <person name="Nordsborg N.B."/>
            <person name="Dmytriyev A."/>
            <person name="Lundby C."/>
            <person name="Olsen J.V."/>
        </authorList>
    </citation>
    <scope>PHOSPHORYLATION [LARGE SCALE ANALYSIS] AT SER-7</scope>
    <scope>IDENTIFICATION BY MASS SPECTROMETRY [LARGE SCALE ANALYSIS]</scope>
</reference>
<protein>
    <recommendedName>
        <fullName>Nuclear cap-binding protein subunit 1</fullName>
    </recommendedName>
    <alternativeName>
        <fullName>80 kDa nuclear cap-binding protein</fullName>
        <shortName>CBP80</shortName>
        <shortName>NCBP 80 kDa subunit</shortName>
    </alternativeName>
</protein>
<accession>Q56A27</accession>
<name>NCBP1_RAT</name>
<feature type="chain" id="PRO_0000239780" description="Nuclear cap-binding protein subunit 1">
    <location>
        <begin position="1"/>
        <end position="790"/>
    </location>
</feature>
<feature type="domain" description="MIF4G">
    <location>
        <begin position="28"/>
        <end position="240"/>
    </location>
</feature>
<feature type="region of interest" description="Disordered" evidence="4">
    <location>
        <begin position="1"/>
        <end position="26"/>
    </location>
</feature>
<feature type="coiled-coil region" evidence="3">
    <location>
        <begin position="643"/>
        <end position="713"/>
    </location>
</feature>
<feature type="short sequence motif" description="Nuclear localization signal" evidence="3">
    <location>
        <begin position="3"/>
        <end position="20"/>
    </location>
</feature>
<feature type="modified residue" description="Phosphoserine" evidence="6">
    <location>
        <position position="7"/>
    </location>
</feature>
<feature type="modified residue" description="Phosphothreonine" evidence="1">
    <location>
        <position position="21"/>
    </location>
</feature>
<feature type="modified residue" description="Phosphoserine" evidence="1">
    <location>
        <position position="22"/>
    </location>
</feature>
<feature type="modified residue" description="Phosphoserine" evidence="1">
    <location>
        <position position="201"/>
    </location>
</feature>
<feature type="modified residue" description="N6-acetyllysine" evidence="1">
    <location>
        <position position="204"/>
    </location>
</feature>
<feature type="modified residue" description="N6-acetyllysine" evidence="1">
    <location>
        <position position="698"/>
    </location>
</feature>
<feature type="cross-link" description="Glycyl lysine isopeptide (Lys-Gly) (interchain with G-Cter in SUMO2)" evidence="1">
    <location>
        <position position="684"/>
    </location>
</feature>
<keyword id="KW-0007">Acetylation</keyword>
<keyword id="KW-0175">Coiled coil</keyword>
<keyword id="KW-0963">Cytoplasm</keyword>
<keyword id="KW-1017">Isopeptide bond</keyword>
<keyword id="KW-0506">mRNA capping</keyword>
<keyword id="KW-0507">mRNA processing</keyword>
<keyword id="KW-0508">mRNA splicing</keyword>
<keyword id="KW-0509">mRNA transport</keyword>
<keyword id="KW-0866">Nonsense-mediated mRNA decay</keyword>
<keyword id="KW-0539">Nucleus</keyword>
<keyword id="KW-0597">Phosphoprotein</keyword>
<keyword id="KW-1185">Reference proteome</keyword>
<keyword id="KW-0943">RNA-mediated gene silencing</keyword>
<keyword id="KW-0810">Translation regulation</keyword>
<keyword id="KW-0813">Transport</keyword>
<keyword id="KW-0832">Ubl conjugation</keyword>
<comment type="function">
    <text evidence="1">Component of the cap-binding complex (CBC), which binds cotranscriptionally to the 5'-cap of pre-mRNAs and is involved in various processes such as pre-mRNA splicing, translation regulation, nonsense-mediated mRNA decay, RNA-mediated gene silencing (RNAi) by microRNAs (miRNAs) and mRNA export. The CBC complex is involved in mRNA export from the nucleus via its interaction with ALYREF/THOC4/ALY, leading to the recruitment of the mRNA export machinery to the 5'-end of mRNA and to mRNA export in a 5' to 3' direction through the nuclear pore. The CBC complex is also involved in mediating U snRNA and intronless mRNAs export from the nucleus. The CBC complex is essential for a pioneer round of mRNA translation, before steady state translation when the CBC complex is replaced by cytoplasmic cap-binding protein eIF4E. The pioneer round of mRNA translation mediated by the CBC complex plays a central role in nonsense-mediated mRNA decay (NMD), NMD only taking place in mRNAs bound to the CBC complex, but not on eIF4E-bound mRNAs. The CBC complex enhances NMD in mRNAs containing at least one exon-junction complex (EJC) via its interaction with UPF1, promoting the interaction between UPF1 and UPF2. The CBC complex is also involved in 'failsafe' NMD, which is independent of the EJC complex, while it does not participate in Staufen-mediated mRNA decay (SMD). During cell proliferation, the CBC complex is also involved in microRNAs (miRNAs) biogenesis via its interaction with SRRT/ARS2 and is required for miRNA-mediated RNA interference. The CBC complex also acts as a negative regulator of PARN, thereby acting as an inhibitor of mRNA deadenylation. In the CBC complex, NCBP1/CBP80 does not bind directly capped RNAs (m7GpppG-capped RNA) but is required to stabilize the movement of the N-terminal loop of NCBP2/CBP20 and lock the CBC into a high affinity cap-binding state with the cap structure. Associates with NCBP3 to form an alternative cap-binding complex (CBC) which plays a key role in mRNA export and is particularly important in cellular stress situations such as virus infections. The conventional CBC with NCBP2 binds both small nuclear RNA (snRNA) and messenger (mRNA) and is involved in their export from the nucleus whereas the alternative CBC with NCBP3 does not bind snRNA and associates only with mRNA thereby playing a role only in mRNA export. NCBP1/CBP80 is required for cell growth and viability (By similarity).</text>
</comment>
<comment type="subunit">
    <text evidence="1 2">Component of the nuclear cap-binding complex (CBC), a heterodimer composed of NCBP1/CBP80 and NCBP2/CBP20 that interacts with m7GpppG-capped RNA. Found in a U snRNA export complex containing PHAX/RNUXA, NCBP1/CBP80, NCBP2/CBP20, RAN, XPO1 and m7G-capped RNA. Identified in a IGF2BP1-dependent mRNP granule complex containing untranslated mRNAs. Interacts with PHAX/RNUXA, SRRT/ARS2, EIF4G2, IGF2BP1, HNRNPF, HNRNPH1, KIAA0427/CTIF, PARN, DROSHA, UPF1 and ALYREF/THOC4. May interact with EIF4G1; the interaction is however controversial since it is reported by, and, but is not observed by. The large PER complex involved in the repression of transcriptional termination is composed of at least PER2, CDK9, DDX5, DHX9, NCBP1/CBP80 and POLR2A. Component of an alternative nuclear cap-binding complex (CBC) composed of NCBP1/CBP80 and NCBP3. Interacts with METTL3. Interacts with ZFC3H1 in a RNase-insensitive manner (By similarity). Interacts with MTREX (By similarity). Interacts with TASOR (By similarity). Interacts with DHX34; the interaction is RNA-dependent (By similarity). Interacts with KPNA3 (By similarity).</text>
</comment>
<comment type="subcellular location">
    <subcellularLocation>
        <location evidence="1">Nucleus</location>
    </subcellularLocation>
    <subcellularLocation>
        <location evidence="1">Cytoplasm</location>
    </subcellularLocation>
    <text evidence="1">Localized in cytoplasmic mRNP granules containing untranslated mRNAs.</text>
</comment>
<comment type="PTM">
    <text evidence="1">Dephosphorylated at Thr-21 by the PNUTS-PP1 complex during RNA polymerase II transcription pause-release.</text>
</comment>
<comment type="similarity">
    <text evidence="5">Belongs to the NCBP1 family.</text>
</comment>